<sequence length="143" mass="15912">MFLGTYTPKLDDKGRLTLPAKFRDALAGGLMVTKSQDHSLAVYPRAAFEQLARRASKAPRSNPEARAFLRNLAAGTDEQHPDSQGRITLSADHRRYASLSKDCVVIGAVDYLEIWDAQAWQNYQQIHEENFSAASDEALGDIF</sequence>
<evidence type="ECO:0000255" key="1">
    <source>
        <dbReference type="HAMAP-Rule" id="MF_01008"/>
    </source>
</evidence>
<evidence type="ECO:0000255" key="2">
    <source>
        <dbReference type="PROSITE-ProRule" id="PRU01076"/>
    </source>
</evidence>
<keyword id="KW-0963">Cytoplasm</keyword>
<keyword id="KW-0238">DNA-binding</keyword>
<keyword id="KW-1185">Reference proteome</keyword>
<keyword id="KW-0677">Repeat</keyword>
<keyword id="KW-0804">Transcription</keyword>
<keyword id="KW-0805">Transcription regulation</keyword>
<name>MRAZ_MYCBO</name>
<dbReference type="EMBL" id="LT708304">
    <property type="protein sequence ID" value="SIU00798.1"/>
    <property type="molecule type" value="Genomic_DNA"/>
</dbReference>
<dbReference type="RefSeq" id="NP_855839.1">
    <property type="nucleotide sequence ID" value="NC_002945.3"/>
</dbReference>
<dbReference type="RefSeq" id="WP_003411225.1">
    <property type="nucleotide sequence ID" value="NC_002945.4"/>
</dbReference>
<dbReference type="SMR" id="P65437"/>
<dbReference type="KEGG" id="mbo:BQ2027_MB2190C"/>
<dbReference type="PATRIC" id="fig|233413.5.peg.2406"/>
<dbReference type="Proteomes" id="UP000001419">
    <property type="component" value="Chromosome"/>
</dbReference>
<dbReference type="GO" id="GO:0005737">
    <property type="term" value="C:cytoplasm"/>
    <property type="evidence" value="ECO:0007669"/>
    <property type="project" value="UniProtKB-UniRule"/>
</dbReference>
<dbReference type="GO" id="GO:0009295">
    <property type="term" value="C:nucleoid"/>
    <property type="evidence" value="ECO:0007669"/>
    <property type="project" value="UniProtKB-SubCell"/>
</dbReference>
<dbReference type="GO" id="GO:0003700">
    <property type="term" value="F:DNA-binding transcription factor activity"/>
    <property type="evidence" value="ECO:0007669"/>
    <property type="project" value="UniProtKB-UniRule"/>
</dbReference>
<dbReference type="GO" id="GO:0000976">
    <property type="term" value="F:transcription cis-regulatory region binding"/>
    <property type="evidence" value="ECO:0007669"/>
    <property type="project" value="TreeGrafter"/>
</dbReference>
<dbReference type="GO" id="GO:2000143">
    <property type="term" value="P:negative regulation of DNA-templated transcription initiation"/>
    <property type="evidence" value="ECO:0007669"/>
    <property type="project" value="TreeGrafter"/>
</dbReference>
<dbReference type="CDD" id="cd16321">
    <property type="entry name" value="MraZ_C"/>
    <property type="match status" value="1"/>
</dbReference>
<dbReference type="CDD" id="cd16320">
    <property type="entry name" value="MraZ_N"/>
    <property type="match status" value="1"/>
</dbReference>
<dbReference type="FunFam" id="3.40.1550.20:FF:000004">
    <property type="entry name" value="Transcriptional regulator MraZ"/>
    <property type="match status" value="1"/>
</dbReference>
<dbReference type="Gene3D" id="3.40.1550.20">
    <property type="entry name" value="Transcriptional regulator MraZ domain"/>
    <property type="match status" value="1"/>
</dbReference>
<dbReference type="HAMAP" id="MF_01008">
    <property type="entry name" value="MraZ"/>
    <property type="match status" value="1"/>
</dbReference>
<dbReference type="InterPro" id="IPR003444">
    <property type="entry name" value="MraZ"/>
</dbReference>
<dbReference type="InterPro" id="IPR035644">
    <property type="entry name" value="MraZ_C"/>
</dbReference>
<dbReference type="InterPro" id="IPR020603">
    <property type="entry name" value="MraZ_dom"/>
</dbReference>
<dbReference type="InterPro" id="IPR035642">
    <property type="entry name" value="MraZ_N"/>
</dbReference>
<dbReference type="InterPro" id="IPR038619">
    <property type="entry name" value="MraZ_sf"/>
</dbReference>
<dbReference type="InterPro" id="IPR007159">
    <property type="entry name" value="SpoVT-AbrB_dom"/>
</dbReference>
<dbReference type="InterPro" id="IPR037914">
    <property type="entry name" value="SpoVT-AbrB_sf"/>
</dbReference>
<dbReference type="NCBIfam" id="TIGR00242">
    <property type="entry name" value="division/cell wall cluster transcriptional repressor MraZ"/>
    <property type="match status" value="1"/>
</dbReference>
<dbReference type="PANTHER" id="PTHR34701">
    <property type="entry name" value="TRANSCRIPTIONAL REGULATOR MRAZ"/>
    <property type="match status" value="1"/>
</dbReference>
<dbReference type="PANTHER" id="PTHR34701:SF1">
    <property type="entry name" value="TRANSCRIPTIONAL REGULATOR MRAZ"/>
    <property type="match status" value="1"/>
</dbReference>
<dbReference type="Pfam" id="PF02381">
    <property type="entry name" value="MraZ"/>
    <property type="match status" value="2"/>
</dbReference>
<dbReference type="SUPFAM" id="SSF89447">
    <property type="entry name" value="AbrB/MazE/MraZ-like"/>
    <property type="match status" value="1"/>
</dbReference>
<dbReference type="PROSITE" id="PS51740">
    <property type="entry name" value="SPOVT_ABRB"/>
    <property type="match status" value="2"/>
</dbReference>
<organism>
    <name type="scientific">Mycobacterium bovis (strain ATCC BAA-935 / AF2122/97)</name>
    <dbReference type="NCBI Taxonomy" id="233413"/>
    <lineage>
        <taxon>Bacteria</taxon>
        <taxon>Bacillati</taxon>
        <taxon>Actinomycetota</taxon>
        <taxon>Actinomycetes</taxon>
        <taxon>Mycobacteriales</taxon>
        <taxon>Mycobacteriaceae</taxon>
        <taxon>Mycobacterium</taxon>
        <taxon>Mycobacterium tuberculosis complex</taxon>
    </lineage>
</organism>
<reference key="1">
    <citation type="journal article" date="2003" name="Proc. Natl. Acad. Sci. U.S.A.">
        <title>The complete genome sequence of Mycobacterium bovis.</title>
        <authorList>
            <person name="Garnier T."/>
            <person name="Eiglmeier K."/>
            <person name="Camus J.-C."/>
            <person name="Medina N."/>
            <person name="Mansoor H."/>
            <person name="Pryor M."/>
            <person name="Duthoy S."/>
            <person name="Grondin S."/>
            <person name="Lacroix C."/>
            <person name="Monsempe C."/>
            <person name="Simon S."/>
            <person name="Harris B."/>
            <person name="Atkin R."/>
            <person name="Doggett J."/>
            <person name="Mayes R."/>
            <person name="Keating L."/>
            <person name="Wheeler P.R."/>
            <person name="Parkhill J."/>
            <person name="Barrell B.G."/>
            <person name="Cole S.T."/>
            <person name="Gordon S.V."/>
            <person name="Hewinson R.G."/>
        </authorList>
    </citation>
    <scope>NUCLEOTIDE SEQUENCE [LARGE SCALE GENOMIC DNA]</scope>
    <source>
        <strain>ATCC BAA-935 / AF2122/97</strain>
    </source>
</reference>
<reference key="2">
    <citation type="journal article" date="2017" name="Genome Announc.">
        <title>Updated reference genome sequence and annotation of Mycobacterium bovis AF2122/97.</title>
        <authorList>
            <person name="Malone K.M."/>
            <person name="Farrell D."/>
            <person name="Stuber T.P."/>
            <person name="Schubert O.T."/>
            <person name="Aebersold R."/>
            <person name="Robbe-Austerman S."/>
            <person name="Gordon S.V."/>
        </authorList>
    </citation>
    <scope>NUCLEOTIDE SEQUENCE [LARGE SCALE GENOMIC DNA]</scope>
    <scope>GENOME REANNOTATION</scope>
    <source>
        <strain>ATCC BAA-935 / AF2122/97</strain>
    </source>
</reference>
<accession>P65437</accession>
<accession>A0A1R3Y0B6</accession>
<accession>O06211</accession>
<accession>X2BJY0</accession>
<protein>
    <recommendedName>
        <fullName>Transcriptional regulator MraZ</fullName>
    </recommendedName>
</protein>
<gene>
    <name evidence="1" type="primary">mraZ</name>
    <name type="ordered locus">BQ2027_MB2190C</name>
</gene>
<comment type="subunit">
    <text evidence="1">Forms oligomers.</text>
</comment>
<comment type="subcellular location">
    <subcellularLocation>
        <location evidence="1">Cytoplasm</location>
        <location evidence="1">Nucleoid</location>
    </subcellularLocation>
</comment>
<comment type="similarity">
    <text evidence="1">Belongs to the MraZ family.</text>
</comment>
<feature type="chain" id="PRO_0000108511" description="Transcriptional regulator MraZ">
    <location>
        <begin position="1"/>
        <end position="143"/>
    </location>
</feature>
<feature type="domain" description="SpoVT-AbrB 1" evidence="2">
    <location>
        <begin position="5"/>
        <end position="47"/>
    </location>
</feature>
<feature type="domain" description="SpoVT-AbrB 2" evidence="2">
    <location>
        <begin position="76"/>
        <end position="119"/>
    </location>
</feature>
<proteinExistence type="inferred from homology"/>